<comment type="catalytic activity">
    <reaction evidence="1">
        <text>2-formamido-N(1)-(5-O-phospho-beta-D-ribosyl)acetamidine + ATP = 5-amino-1-(5-phospho-beta-D-ribosyl)imidazole + ADP + phosphate + H(+)</text>
        <dbReference type="Rhea" id="RHEA:23032"/>
        <dbReference type="ChEBI" id="CHEBI:15378"/>
        <dbReference type="ChEBI" id="CHEBI:30616"/>
        <dbReference type="ChEBI" id="CHEBI:43474"/>
        <dbReference type="ChEBI" id="CHEBI:137981"/>
        <dbReference type="ChEBI" id="CHEBI:147287"/>
        <dbReference type="ChEBI" id="CHEBI:456216"/>
        <dbReference type="EC" id="6.3.3.1"/>
    </reaction>
</comment>
<comment type="pathway">
    <text evidence="1">Purine metabolism; IMP biosynthesis via de novo pathway; 5-amino-1-(5-phospho-D-ribosyl)imidazole from N(2)-formyl-N(1)-(5-phospho-D-ribosyl)glycinamide: step 2/2.</text>
</comment>
<comment type="subcellular location">
    <subcellularLocation>
        <location evidence="1">Cytoplasm</location>
    </subcellularLocation>
</comment>
<comment type="similarity">
    <text evidence="1">Belongs to the AIR synthase family.</text>
</comment>
<name>PUR5_NEIM0</name>
<protein>
    <recommendedName>
        <fullName evidence="1">Phosphoribosylformylglycinamidine cyclo-ligase</fullName>
        <ecNumber evidence="1">6.3.3.1</ecNumber>
    </recommendedName>
    <alternativeName>
        <fullName evidence="1">AIR synthase</fullName>
    </alternativeName>
    <alternativeName>
        <fullName evidence="1">AIRS</fullName>
    </alternativeName>
    <alternativeName>
        <fullName evidence="1">Phosphoribosyl-aminoimidazole synthetase</fullName>
    </alternativeName>
</protein>
<reference key="1">
    <citation type="journal article" date="2008" name="Genomics">
        <title>Characterization of ST-4821 complex, a unique Neisseria meningitidis clone.</title>
        <authorList>
            <person name="Peng J."/>
            <person name="Yang L."/>
            <person name="Yang F."/>
            <person name="Yang J."/>
            <person name="Yan Y."/>
            <person name="Nie H."/>
            <person name="Zhang X."/>
            <person name="Xiong Z."/>
            <person name="Jiang Y."/>
            <person name="Cheng F."/>
            <person name="Xu X."/>
            <person name="Chen S."/>
            <person name="Sun L."/>
            <person name="Li W."/>
            <person name="Shen Y."/>
            <person name="Shao Z."/>
            <person name="Liang X."/>
            <person name="Xu J."/>
            <person name="Jin Q."/>
        </authorList>
    </citation>
    <scope>NUCLEOTIDE SEQUENCE [LARGE SCALE GENOMIC DNA]</scope>
    <source>
        <strain>053442</strain>
    </source>
</reference>
<proteinExistence type="inferred from homology"/>
<sequence length="344" mass="36946">MSTSLSYRDAGVDIDAGDQLVENIKPFAKRTMRPEVLGDLGGFGALVEIGKKYKNPVLVSGTDGVGTKLKLAFDWDKHDTVGIDLVAMSVNDILVQGAEPLFFLDYFACGKLDVPRATDVIKGIAQGCEESGCALIGGETAEMPGMYPVGEYDLAGFAVGVVEKENVITGRSIGAGDVVLGLASNGAHSNGYSLIRKIIERDNPDLDAEFDNGKTLREAVIAPTRLYVKPILAALEKFTIKGMAHITGGGITENVPRVLPENTVAQIDAKSWELPKLFQWLQKAGNVETQEMYRTFNCGIGMVVIVAAEDADAVQGLLGEQGETVYRLGLIRERQGDEHQTQVA</sequence>
<accession>A9LZD2</accession>
<keyword id="KW-0067">ATP-binding</keyword>
<keyword id="KW-0963">Cytoplasm</keyword>
<keyword id="KW-0436">Ligase</keyword>
<keyword id="KW-0547">Nucleotide-binding</keyword>
<keyword id="KW-0658">Purine biosynthesis</keyword>
<gene>
    <name evidence="1" type="primary">purM</name>
    <name type="ordered locus">NMCC_1133</name>
</gene>
<evidence type="ECO:0000255" key="1">
    <source>
        <dbReference type="HAMAP-Rule" id="MF_00741"/>
    </source>
</evidence>
<feature type="chain" id="PRO_1000083462" description="Phosphoribosylformylglycinamidine cyclo-ligase">
    <location>
        <begin position="1"/>
        <end position="344"/>
    </location>
</feature>
<organism>
    <name type="scientific">Neisseria meningitidis serogroup C (strain 053442)</name>
    <dbReference type="NCBI Taxonomy" id="374833"/>
    <lineage>
        <taxon>Bacteria</taxon>
        <taxon>Pseudomonadati</taxon>
        <taxon>Pseudomonadota</taxon>
        <taxon>Betaproteobacteria</taxon>
        <taxon>Neisseriales</taxon>
        <taxon>Neisseriaceae</taxon>
        <taxon>Neisseria</taxon>
    </lineage>
</organism>
<dbReference type="EC" id="6.3.3.1" evidence="1"/>
<dbReference type="EMBL" id="CP000381">
    <property type="protein sequence ID" value="ABX73308.1"/>
    <property type="molecule type" value="Genomic_DNA"/>
</dbReference>
<dbReference type="RefSeq" id="WP_002226346.1">
    <property type="nucleotide sequence ID" value="NC_010120.1"/>
</dbReference>
<dbReference type="SMR" id="A9LZD2"/>
<dbReference type="KEGG" id="nmn:NMCC_1133"/>
<dbReference type="HOGENOM" id="CLU_047116_0_0_4"/>
<dbReference type="UniPathway" id="UPA00074">
    <property type="reaction ID" value="UER00129"/>
</dbReference>
<dbReference type="Proteomes" id="UP000001177">
    <property type="component" value="Chromosome"/>
</dbReference>
<dbReference type="GO" id="GO:0005829">
    <property type="term" value="C:cytosol"/>
    <property type="evidence" value="ECO:0007669"/>
    <property type="project" value="TreeGrafter"/>
</dbReference>
<dbReference type="GO" id="GO:0005524">
    <property type="term" value="F:ATP binding"/>
    <property type="evidence" value="ECO:0007669"/>
    <property type="project" value="UniProtKB-KW"/>
</dbReference>
<dbReference type="GO" id="GO:0004637">
    <property type="term" value="F:phosphoribosylamine-glycine ligase activity"/>
    <property type="evidence" value="ECO:0007669"/>
    <property type="project" value="TreeGrafter"/>
</dbReference>
<dbReference type="GO" id="GO:0004641">
    <property type="term" value="F:phosphoribosylformylglycinamidine cyclo-ligase activity"/>
    <property type="evidence" value="ECO:0007669"/>
    <property type="project" value="UniProtKB-UniRule"/>
</dbReference>
<dbReference type="GO" id="GO:0006189">
    <property type="term" value="P:'de novo' IMP biosynthetic process"/>
    <property type="evidence" value="ECO:0007669"/>
    <property type="project" value="UniProtKB-UniRule"/>
</dbReference>
<dbReference type="GO" id="GO:0046084">
    <property type="term" value="P:adenine biosynthetic process"/>
    <property type="evidence" value="ECO:0007669"/>
    <property type="project" value="TreeGrafter"/>
</dbReference>
<dbReference type="CDD" id="cd02196">
    <property type="entry name" value="PurM"/>
    <property type="match status" value="1"/>
</dbReference>
<dbReference type="FunFam" id="3.30.1330.10:FF:000001">
    <property type="entry name" value="Phosphoribosylformylglycinamidine cyclo-ligase"/>
    <property type="match status" value="1"/>
</dbReference>
<dbReference type="FunFam" id="3.90.650.10:FF:000001">
    <property type="entry name" value="Phosphoribosylformylglycinamidine cyclo-ligase"/>
    <property type="match status" value="1"/>
</dbReference>
<dbReference type="Gene3D" id="3.90.650.10">
    <property type="entry name" value="PurM-like C-terminal domain"/>
    <property type="match status" value="1"/>
</dbReference>
<dbReference type="Gene3D" id="3.30.1330.10">
    <property type="entry name" value="PurM-like, N-terminal domain"/>
    <property type="match status" value="1"/>
</dbReference>
<dbReference type="HAMAP" id="MF_00741">
    <property type="entry name" value="AIRS"/>
    <property type="match status" value="1"/>
</dbReference>
<dbReference type="InterPro" id="IPR010918">
    <property type="entry name" value="PurM-like_C_dom"/>
</dbReference>
<dbReference type="InterPro" id="IPR036676">
    <property type="entry name" value="PurM-like_C_sf"/>
</dbReference>
<dbReference type="InterPro" id="IPR016188">
    <property type="entry name" value="PurM-like_N"/>
</dbReference>
<dbReference type="InterPro" id="IPR036921">
    <property type="entry name" value="PurM-like_N_sf"/>
</dbReference>
<dbReference type="InterPro" id="IPR004733">
    <property type="entry name" value="PurM_cligase"/>
</dbReference>
<dbReference type="NCBIfam" id="TIGR00878">
    <property type="entry name" value="purM"/>
    <property type="match status" value="1"/>
</dbReference>
<dbReference type="PANTHER" id="PTHR10520:SF12">
    <property type="entry name" value="TRIFUNCTIONAL PURINE BIOSYNTHETIC PROTEIN ADENOSINE-3"/>
    <property type="match status" value="1"/>
</dbReference>
<dbReference type="PANTHER" id="PTHR10520">
    <property type="entry name" value="TRIFUNCTIONAL PURINE BIOSYNTHETIC PROTEIN ADENOSINE-3-RELATED"/>
    <property type="match status" value="1"/>
</dbReference>
<dbReference type="Pfam" id="PF00586">
    <property type="entry name" value="AIRS"/>
    <property type="match status" value="1"/>
</dbReference>
<dbReference type="Pfam" id="PF02769">
    <property type="entry name" value="AIRS_C"/>
    <property type="match status" value="1"/>
</dbReference>
<dbReference type="SUPFAM" id="SSF56042">
    <property type="entry name" value="PurM C-terminal domain-like"/>
    <property type="match status" value="1"/>
</dbReference>
<dbReference type="SUPFAM" id="SSF55326">
    <property type="entry name" value="PurM N-terminal domain-like"/>
    <property type="match status" value="1"/>
</dbReference>